<keyword id="KW-0028">Amino-acid biosynthesis</keyword>
<keyword id="KW-0032">Aminotransferase</keyword>
<keyword id="KW-0963">Cytoplasm</keyword>
<keyword id="KW-0663">Pyridoxal phosphate</keyword>
<keyword id="KW-0664">Pyridoxine biosynthesis</keyword>
<keyword id="KW-1185">Reference proteome</keyword>
<keyword id="KW-0718">Serine biosynthesis</keyword>
<keyword id="KW-0808">Transferase</keyword>
<gene>
    <name evidence="1" type="primary">serC</name>
    <name type="ordered locus">HCH_04982</name>
</gene>
<proteinExistence type="inferred from homology"/>
<organism>
    <name type="scientific">Hahella chejuensis (strain KCTC 2396)</name>
    <dbReference type="NCBI Taxonomy" id="349521"/>
    <lineage>
        <taxon>Bacteria</taxon>
        <taxon>Pseudomonadati</taxon>
        <taxon>Pseudomonadota</taxon>
        <taxon>Gammaproteobacteria</taxon>
        <taxon>Oceanospirillales</taxon>
        <taxon>Hahellaceae</taxon>
        <taxon>Hahella</taxon>
    </lineage>
</organism>
<protein>
    <recommendedName>
        <fullName evidence="1">Phosphoserine aminotransferase</fullName>
        <ecNumber evidence="1">2.6.1.52</ecNumber>
    </recommendedName>
    <alternativeName>
        <fullName evidence="1">Phosphohydroxythreonine aminotransferase</fullName>
        <shortName evidence="1">PSAT</shortName>
    </alternativeName>
</protein>
<reference key="1">
    <citation type="journal article" date="2005" name="Nucleic Acids Res.">
        <title>Genomic blueprint of Hahella chejuensis, a marine microbe producing an algicidal agent.</title>
        <authorList>
            <person name="Jeong H."/>
            <person name="Yim J.H."/>
            <person name="Lee C."/>
            <person name="Choi S.-H."/>
            <person name="Park Y.K."/>
            <person name="Yoon S.H."/>
            <person name="Hur C.-G."/>
            <person name="Kang H.-Y."/>
            <person name="Kim D."/>
            <person name="Lee H.H."/>
            <person name="Park K.H."/>
            <person name="Park S.-H."/>
            <person name="Park H.-S."/>
            <person name="Lee H.K."/>
            <person name="Oh T.K."/>
            <person name="Kim J.F."/>
        </authorList>
    </citation>
    <scope>NUCLEOTIDE SEQUENCE [LARGE SCALE GENOMIC DNA]</scope>
    <source>
        <strain>KCTC 2396</strain>
    </source>
</reference>
<name>SERC_HAHCH</name>
<dbReference type="EC" id="2.6.1.52" evidence="1"/>
<dbReference type="EMBL" id="CP000155">
    <property type="protein sequence ID" value="ABC31672.1"/>
    <property type="molecule type" value="Genomic_DNA"/>
</dbReference>
<dbReference type="RefSeq" id="WP_011398737.1">
    <property type="nucleotide sequence ID" value="NC_007645.1"/>
</dbReference>
<dbReference type="SMR" id="Q2SCF2"/>
<dbReference type="STRING" id="349521.HCH_04982"/>
<dbReference type="KEGG" id="hch:HCH_04982"/>
<dbReference type="eggNOG" id="COG1932">
    <property type="taxonomic scope" value="Bacteria"/>
</dbReference>
<dbReference type="HOGENOM" id="CLU_034866_0_2_6"/>
<dbReference type="OrthoDB" id="9809412at2"/>
<dbReference type="UniPathway" id="UPA00135">
    <property type="reaction ID" value="UER00197"/>
</dbReference>
<dbReference type="UniPathway" id="UPA00244">
    <property type="reaction ID" value="UER00311"/>
</dbReference>
<dbReference type="Proteomes" id="UP000000238">
    <property type="component" value="Chromosome"/>
</dbReference>
<dbReference type="GO" id="GO:0005737">
    <property type="term" value="C:cytoplasm"/>
    <property type="evidence" value="ECO:0007669"/>
    <property type="project" value="UniProtKB-SubCell"/>
</dbReference>
<dbReference type="GO" id="GO:0004648">
    <property type="term" value="F:O-phospho-L-serine:2-oxoglutarate aminotransferase activity"/>
    <property type="evidence" value="ECO:0007669"/>
    <property type="project" value="UniProtKB-UniRule"/>
</dbReference>
<dbReference type="GO" id="GO:0030170">
    <property type="term" value="F:pyridoxal phosphate binding"/>
    <property type="evidence" value="ECO:0007669"/>
    <property type="project" value="UniProtKB-UniRule"/>
</dbReference>
<dbReference type="GO" id="GO:0006564">
    <property type="term" value="P:L-serine biosynthetic process"/>
    <property type="evidence" value="ECO:0007669"/>
    <property type="project" value="UniProtKB-UniRule"/>
</dbReference>
<dbReference type="GO" id="GO:0008615">
    <property type="term" value="P:pyridoxine biosynthetic process"/>
    <property type="evidence" value="ECO:0007669"/>
    <property type="project" value="UniProtKB-UniRule"/>
</dbReference>
<dbReference type="CDD" id="cd00611">
    <property type="entry name" value="PSAT_like"/>
    <property type="match status" value="1"/>
</dbReference>
<dbReference type="FunFam" id="3.40.640.10:FF:000010">
    <property type="entry name" value="Phosphoserine aminotransferase"/>
    <property type="match status" value="1"/>
</dbReference>
<dbReference type="FunFam" id="3.90.1150.10:FF:000006">
    <property type="entry name" value="Phosphoserine aminotransferase"/>
    <property type="match status" value="1"/>
</dbReference>
<dbReference type="Gene3D" id="3.90.1150.10">
    <property type="entry name" value="Aspartate Aminotransferase, domain 1"/>
    <property type="match status" value="1"/>
</dbReference>
<dbReference type="Gene3D" id="3.40.640.10">
    <property type="entry name" value="Type I PLP-dependent aspartate aminotransferase-like (Major domain)"/>
    <property type="match status" value="1"/>
</dbReference>
<dbReference type="HAMAP" id="MF_00160">
    <property type="entry name" value="SerC_aminotrans_5"/>
    <property type="match status" value="1"/>
</dbReference>
<dbReference type="InterPro" id="IPR000192">
    <property type="entry name" value="Aminotrans_V_dom"/>
</dbReference>
<dbReference type="InterPro" id="IPR020578">
    <property type="entry name" value="Aminotrans_V_PyrdxlP_BS"/>
</dbReference>
<dbReference type="InterPro" id="IPR022278">
    <property type="entry name" value="Pser_aminoTfrase"/>
</dbReference>
<dbReference type="InterPro" id="IPR015424">
    <property type="entry name" value="PyrdxlP-dep_Trfase"/>
</dbReference>
<dbReference type="InterPro" id="IPR015421">
    <property type="entry name" value="PyrdxlP-dep_Trfase_major"/>
</dbReference>
<dbReference type="InterPro" id="IPR015422">
    <property type="entry name" value="PyrdxlP-dep_Trfase_small"/>
</dbReference>
<dbReference type="NCBIfam" id="NF003764">
    <property type="entry name" value="PRK05355.1"/>
    <property type="match status" value="1"/>
</dbReference>
<dbReference type="NCBIfam" id="TIGR01364">
    <property type="entry name" value="serC_1"/>
    <property type="match status" value="1"/>
</dbReference>
<dbReference type="PANTHER" id="PTHR43247">
    <property type="entry name" value="PHOSPHOSERINE AMINOTRANSFERASE"/>
    <property type="match status" value="1"/>
</dbReference>
<dbReference type="PANTHER" id="PTHR43247:SF1">
    <property type="entry name" value="PHOSPHOSERINE AMINOTRANSFERASE"/>
    <property type="match status" value="1"/>
</dbReference>
<dbReference type="Pfam" id="PF00266">
    <property type="entry name" value="Aminotran_5"/>
    <property type="match status" value="1"/>
</dbReference>
<dbReference type="PIRSF" id="PIRSF000525">
    <property type="entry name" value="SerC"/>
    <property type="match status" value="1"/>
</dbReference>
<dbReference type="SUPFAM" id="SSF53383">
    <property type="entry name" value="PLP-dependent transferases"/>
    <property type="match status" value="1"/>
</dbReference>
<dbReference type="PROSITE" id="PS00595">
    <property type="entry name" value="AA_TRANSFER_CLASS_5"/>
    <property type="match status" value="1"/>
</dbReference>
<comment type="function">
    <text evidence="1">Catalyzes the reversible conversion of 3-phosphohydroxypyruvate to phosphoserine and of 3-hydroxy-2-oxo-4-phosphonooxybutanoate to phosphohydroxythreonine.</text>
</comment>
<comment type="catalytic activity">
    <reaction evidence="1">
        <text>O-phospho-L-serine + 2-oxoglutarate = 3-phosphooxypyruvate + L-glutamate</text>
        <dbReference type="Rhea" id="RHEA:14329"/>
        <dbReference type="ChEBI" id="CHEBI:16810"/>
        <dbReference type="ChEBI" id="CHEBI:18110"/>
        <dbReference type="ChEBI" id="CHEBI:29985"/>
        <dbReference type="ChEBI" id="CHEBI:57524"/>
        <dbReference type="EC" id="2.6.1.52"/>
    </reaction>
</comment>
<comment type="catalytic activity">
    <reaction evidence="1">
        <text>4-(phosphooxy)-L-threonine + 2-oxoglutarate = (R)-3-hydroxy-2-oxo-4-phosphooxybutanoate + L-glutamate</text>
        <dbReference type="Rhea" id="RHEA:16573"/>
        <dbReference type="ChEBI" id="CHEBI:16810"/>
        <dbReference type="ChEBI" id="CHEBI:29985"/>
        <dbReference type="ChEBI" id="CHEBI:58452"/>
        <dbReference type="ChEBI" id="CHEBI:58538"/>
        <dbReference type="EC" id="2.6.1.52"/>
    </reaction>
</comment>
<comment type="cofactor">
    <cofactor evidence="1">
        <name>pyridoxal 5'-phosphate</name>
        <dbReference type="ChEBI" id="CHEBI:597326"/>
    </cofactor>
    <text evidence="1">Binds 1 pyridoxal phosphate per subunit.</text>
</comment>
<comment type="pathway">
    <text evidence="1">Amino-acid biosynthesis; L-serine biosynthesis; L-serine from 3-phospho-D-glycerate: step 2/3.</text>
</comment>
<comment type="pathway">
    <text evidence="1">Cofactor biosynthesis; pyridoxine 5'-phosphate biosynthesis; pyridoxine 5'-phosphate from D-erythrose 4-phosphate: step 3/5.</text>
</comment>
<comment type="subunit">
    <text evidence="1">Homodimer.</text>
</comment>
<comment type="subcellular location">
    <subcellularLocation>
        <location evidence="1">Cytoplasm</location>
    </subcellularLocation>
</comment>
<comment type="similarity">
    <text evidence="1">Belongs to the class-V pyridoxal-phosphate-dependent aminotransferase family. SerC subfamily.</text>
</comment>
<accession>Q2SCF2</accession>
<sequence length="361" mass="39513">MADRKFNFCAGPSALPTEVLLQAQAELLDWRGKGLSIMEMSHRSDDFVAVAVEAERDFRELMSVPDNYKVLFVQGGAATQFASVPLNLLKLGAEADYIDTGIWSKKAIAEAGRYLKVNVAASAKDNGYACIPARSEWRLSESAGYVHYTPNETIGGVEFLDIPDVGDKPLVADMSSTILSRPVDISRFGVIYAGAQKNIGPAGLTLVIVREDLLGYASDSLPTMLNYKVASENDSMVNTPPTFSWYLAGLVFKWLKGKGGVQAMEAINCRKADKLYSYIDDSEFYANPIDLSCRSWMNVPFTLKDDRLDQKFLQEAEGAGLLNLQGHRSVGGMRASLYNALPEEAVDALIGFMQDFAGRNA</sequence>
<evidence type="ECO:0000255" key="1">
    <source>
        <dbReference type="HAMAP-Rule" id="MF_00160"/>
    </source>
</evidence>
<feature type="chain" id="PRO_1000123469" description="Phosphoserine aminotransferase">
    <location>
        <begin position="1"/>
        <end position="361"/>
    </location>
</feature>
<feature type="binding site" evidence="1">
    <location>
        <position position="43"/>
    </location>
    <ligand>
        <name>L-glutamate</name>
        <dbReference type="ChEBI" id="CHEBI:29985"/>
    </ligand>
</feature>
<feature type="binding site" evidence="1">
    <location>
        <position position="103"/>
    </location>
    <ligand>
        <name>pyridoxal 5'-phosphate</name>
        <dbReference type="ChEBI" id="CHEBI:597326"/>
    </ligand>
</feature>
<feature type="binding site" evidence="1">
    <location>
        <position position="153"/>
    </location>
    <ligand>
        <name>pyridoxal 5'-phosphate</name>
        <dbReference type="ChEBI" id="CHEBI:597326"/>
    </ligand>
</feature>
<feature type="binding site" evidence="1">
    <location>
        <position position="173"/>
    </location>
    <ligand>
        <name>pyridoxal 5'-phosphate</name>
        <dbReference type="ChEBI" id="CHEBI:597326"/>
    </ligand>
</feature>
<feature type="binding site" evidence="1">
    <location>
        <position position="196"/>
    </location>
    <ligand>
        <name>pyridoxal 5'-phosphate</name>
        <dbReference type="ChEBI" id="CHEBI:597326"/>
    </ligand>
</feature>
<feature type="binding site" evidence="1">
    <location>
        <begin position="238"/>
        <end position="239"/>
    </location>
    <ligand>
        <name>pyridoxal 5'-phosphate</name>
        <dbReference type="ChEBI" id="CHEBI:597326"/>
    </ligand>
</feature>
<feature type="modified residue" description="N6-(pyridoxal phosphate)lysine" evidence="1">
    <location>
        <position position="197"/>
    </location>
</feature>